<comment type="function">
    <text evidence="2">Antitoxin component of a type II toxin-antitoxin (TA) system. Upon expression in M.smegmatis neutralizes the effect of cognate toxin VapC32.</text>
</comment>
<comment type="subcellular location">
    <subcellularLocation>
        <location evidence="3">Secreted</location>
    </subcellularLocation>
    <text>Following 6 weeks of nutrient starvation (PubMed:23345537).</text>
</comment>
<reference key="1">
    <citation type="journal article" date="1998" name="Nature">
        <title>Deciphering the biology of Mycobacterium tuberculosis from the complete genome sequence.</title>
        <authorList>
            <person name="Cole S.T."/>
            <person name="Brosch R."/>
            <person name="Parkhill J."/>
            <person name="Garnier T."/>
            <person name="Churcher C.M."/>
            <person name="Harris D.E."/>
            <person name="Gordon S.V."/>
            <person name="Eiglmeier K."/>
            <person name="Gas S."/>
            <person name="Barry C.E. III"/>
            <person name="Tekaia F."/>
            <person name="Badcock K."/>
            <person name="Basham D."/>
            <person name="Brown D."/>
            <person name="Chillingworth T."/>
            <person name="Connor R."/>
            <person name="Davies R.M."/>
            <person name="Devlin K."/>
            <person name="Feltwell T."/>
            <person name="Gentles S."/>
            <person name="Hamlin N."/>
            <person name="Holroyd S."/>
            <person name="Hornsby T."/>
            <person name="Jagels K."/>
            <person name="Krogh A."/>
            <person name="McLean J."/>
            <person name="Moule S."/>
            <person name="Murphy L.D."/>
            <person name="Oliver S."/>
            <person name="Osborne J."/>
            <person name="Quail M.A."/>
            <person name="Rajandream M.A."/>
            <person name="Rogers J."/>
            <person name="Rutter S."/>
            <person name="Seeger K."/>
            <person name="Skelton S."/>
            <person name="Squares S."/>
            <person name="Squares R."/>
            <person name="Sulston J.E."/>
            <person name="Taylor K."/>
            <person name="Whitehead S."/>
            <person name="Barrell B.G."/>
        </authorList>
    </citation>
    <scope>NUCLEOTIDE SEQUENCE [LARGE SCALE GENOMIC DNA]</scope>
    <source>
        <strain>ATCC 25618 / H37Rv</strain>
    </source>
</reference>
<reference key="2">
    <citation type="journal article" date="2009" name="PLoS Genet.">
        <title>Comprehensive functional analysis of Mycobacterium tuberculosis toxin-antitoxin systems: implications for pathogenesis, stress responses, and evolution.</title>
        <authorList>
            <person name="Ramage H.R."/>
            <person name="Connolly L.E."/>
            <person name="Cox J.S."/>
        </authorList>
    </citation>
    <scope>EXPRESSION IN M.SMEGMATIS</scope>
    <scope>FUNCTION AS AN ANTITOXIN</scope>
    <source>
        <strain>ATCC 35801 / TMC 107 / Erdman</strain>
    </source>
</reference>
<reference key="3">
    <citation type="journal article" date="2011" name="Mol. Cell. Proteomics">
        <title>Proteogenomic analysis of Mycobacterium tuberculosis by high resolution mass spectrometry.</title>
        <authorList>
            <person name="Kelkar D.S."/>
            <person name="Kumar D."/>
            <person name="Kumar P."/>
            <person name="Balakrishnan L."/>
            <person name="Muthusamy B."/>
            <person name="Yadav A.K."/>
            <person name="Shrivastava P."/>
            <person name="Marimuthu A."/>
            <person name="Anand S."/>
            <person name="Sundaram H."/>
            <person name="Kingsbury R."/>
            <person name="Harsha H.C."/>
            <person name="Nair B."/>
            <person name="Prasad T.S."/>
            <person name="Chauhan D.S."/>
            <person name="Katoch K."/>
            <person name="Katoch V.M."/>
            <person name="Kumar P."/>
            <person name="Chaerkady R."/>
            <person name="Ramachandran S."/>
            <person name="Dash D."/>
            <person name="Pandey A."/>
        </authorList>
    </citation>
    <scope>IDENTIFICATION BY MASS SPECTROMETRY [LARGE SCALE ANALYSIS]</scope>
    <source>
        <strain>ATCC 25618 / H37Rv</strain>
    </source>
</reference>
<reference key="4">
    <citation type="journal article" date="2013" name="Mol. Cell. Proteomics">
        <title>Proteomic profiling of Mycobacterium tuberculosis identifies nutrient-starvation-responsive toxin-antitoxin systems.</title>
        <authorList>
            <person name="Albrethsen J."/>
            <person name="Agner J."/>
            <person name="Piersma S.R."/>
            <person name="Hoejrup P."/>
            <person name="Pham T.V."/>
            <person name="Weldingh K."/>
            <person name="Jimenez C.R."/>
            <person name="Andersen P."/>
            <person name="Rosenkrands I."/>
        </authorList>
    </citation>
    <scope>IDENTIFICATION BY MASS SPECTROMETRY</scope>
    <scope>SUBCELLULAR LOCATION</scope>
    <source>
        <strain>ATCC 27294 / TMC 102 / H37Rv</strain>
    </source>
</reference>
<dbReference type="EMBL" id="AL123456">
    <property type="protein sequence ID" value="CCP43866.1"/>
    <property type="molecule type" value="Genomic_DNA"/>
</dbReference>
<dbReference type="PIR" id="B70537">
    <property type="entry name" value="B70537"/>
</dbReference>
<dbReference type="RefSeq" id="NP_215629.1">
    <property type="nucleotide sequence ID" value="NC_000962.3"/>
</dbReference>
<dbReference type="RefSeq" id="WP_003405863.1">
    <property type="nucleotide sequence ID" value="NZ_NVQJ01000021.1"/>
</dbReference>
<dbReference type="SMR" id="P9WJ33"/>
<dbReference type="STRING" id="83332.Rv1113"/>
<dbReference type="PaxDb" id="83332-Rv1113"/>
<dbReference type="DNASU" id="885450"/>
<dbReference type="GeneID" id="885450"/>
<dbReference type="KEGG" id="mtu:Rv1113"/>
<dbReference type="KEGG" id="mtv:RVBD_1113"/>
<dbReference type="TubercuList" id="Rv1113"/>
<dbReference type="eggNOG" id="COG5450">
    <property type="taxonomic scope" value="Bacteria"/>
</dbReference>
<dbReference type="InParanoid" id="P9WJ33"/>
<dbReference type="OrthoDB" id="332069at2"/>
<dbReference type="PhylomeDB" id="P9WJ33"/>
<dbReference type="Proteomes" id="UP000001584">
    <property type="component" value="Chromosome"/>
</dbReference>
<dbReference type="GO" id="GO:0005576">
    <property type="term" value="C:extracellular region"/>
    <property type="evidence" value="ECO:0007669"/>
    <property type="project" value="UniProtKB-SubCell"/>
</dbReference>
<dbReference type="GO" id="GO:0045927">
    <property type="term" value="P:positive regulation of growth"/>
    <property type="evidence" value="ECO:0000315"/>
    <property type="project" value="MTBBASE"/>
</dbReference>
<dbReference type="InterPro" id="IPR019239">
    <property type="entry name" value="VapB_antitoxin"/>
</dbReference>
<dbReference type="Pfam" id="PF09957">
    <property type="entry name" value="VapB_antitoxin"/>
    <property type="match status" value="1"/>
</dbReference>
<sequence>MRTTVTVDDALLAKAAELTGVKEKSTLLREGLQTLVRVESARRLAALGGTDPQATAAPRRRTSPR</sequence>
<organism>
    <name type="scientific">Mycobacterium tuberculosis (strain ATCC 25618 / H37Rv)</name>
    <dbReference type="NCBI Taxonomy" id="83332"/>
    <lineage>
        <taxon>Bacteria</taxon>
        <taxon>Bacillati</taxon>
        <taxon>Actinomycetota</taxon>
        <taxon>Actinomycetes</taxon>
        <taxon>Mycobacteriales</taxon>
        <taxon>Mycobacteriaceae</taxon>
        <taxon>Mycobacterium</taxon>
        <taxon>Mycobacterium tuberculosis complex</taxon>
    </lineage>
</organism>
<proteinExistence type="evidence at protein level"/>
<evidence type="ECO:0000256" key="1">
    <source>
        <dbReference type="SAM" id="MobiDB-lite"/>
    </source>
</evidence>
<evidence type="ECO:0000269" key="2">
    <source>
    </source>
</evidence>
<evidence type="ECO:0000269" key="3">
    <source>
    </source>
</evidence>
<accession>P9WJ33</accession>
<accession>L0T5Y0</accession>
<accession>O06565</accession>
<accession>Q7D8U3</accession>
<feature type="chain" id="PRO_0000408076" description="Antitoxin VapB32">
    <location>
        <begin position="1"/>
        <end position="65"/>
    </location>
</feature>
<feature type="region of interest" description="Disordered" evidence="1">
    <location>
        <begin position="46"/>
        <end position="65"/>
    </location>
</feature>
<keyword id="KW-1185">Reference proteome</keyword>
<keyword id="KW-0964">Secreted</keyword>
<keyword id="KW-1277">Toxin-antitoxin system</keyword>
<name>VPB32_MYCTU</name>
<gene>
    <name type="primary">vapB32</name>
    <name type="ordered locus">Rv1113</name>
</gene>
<protein>
    <recommendedName>
        <fullName>Antitoxin VapB32</fullName>
    </recommendedName>
</protein>